<feature type="chain" id="PRO_0000130779" description="Large ribosomal subunit protein uL24">
    <location>
        <begin position="1"/>
        <end position="121"/>
    </location>
</feature>
<comment type="function">
    <text evidence="1">One of two assembly initiator proteins, it binds directly to the 5'-end of the 23S rRNA, where it nucleates assembly of the 50S subunit.</text>
</comment>
<comment type="function">
    <text evidence="1">Located at the polypeptide exit tunnel on the outside of the subunit.</text>
</comment>
<comment type="subunit">
    <text evidence="1">Part of the 50S ribosomal subunit.</text>
</comment>
<comment type="similarity">
    <text evidence="1">Belongs to the universal ribosomal protein uL24 family.</text>
</comment>
<comment type="sequence caution" evidence="2">
    <conflict type="erroneous initiation">
        <sequence resource="EMBL-CDS" id="BAA30882"/>
    </conflict>
    <text>Extended N-terminus.</text>
</comment>
<name>RL24_PYRHO</name>
<organism>
    <name type="scientific">Pyrococcus horikoshii (strain ATCC 700860 / DSM 12428 / JCM 9974 / NBRC 100139 / OT-3)</name>
    <dbReference type="NCBI Taxonomy" id="70601"/>
    <lineage>
        <taxon>Archaea</taxon>
        <taxon>Methanobacteriati</taxon>
        <taxon>Methanobacteriota</taxon>
        <taxon>Thermococci</taxon>
        <taxon>Thermococcales</taxon>
        <taxon>Thermococcaceae</taxon>
        <taxon>Pyrococcus</taxon>
    </lineage>
</organism>
<gene>
    <name evidence="1" type="primary">rpl24</name>
    <name type="ordered locus">PH1767</name>
</gene>
<keyword id="KW-0687">Ribonucleoprotein</keyword>
<keyword id="KW-0689">Ribosomal protein</keyword>
<keyword id="KW-0694">RNA-binding</keyword>
<keyword id="KW-0699">rRNA-binding</keyword>
<accession>O59429</accession>
<evidence type="ECO:0000255" key="1">
    <source>
        <dbReference type="HAMAP-Rule" id="MF_01326"/>
    </source>
</evidence>
<evidence type="ECO:0000305" key="2"/>
<reference key="1">
    <citation type="journal article" date="1998" name="DNA Res.">
        <title>Complete sequence and gene organization of the genome of a hyper-thermophilic archaebacterium, Pyrococcus horikoshii OT3.</title>
        <authorList>
            <person name="Kawarabayasi Y."/>
            <person name="Sawada M."/>
            <person name="Horikawa H."/>
            <person name="Haikawa Y."/>
            <person name="Hino Y."/>
            <person name="Yamamoto S."/>
            <person name="Sekine M."/>
            <person name="Baba S."/>
            <person name="Kosugi H."/>
            <person name="Hosoyama A."/>
            <person name="Nagai Y."/>
            <person name="Sakai M."/>
            <person name="Ogura K."/>
            <person name="Otsuka R."/>
            <person name="Nakazawa H."/>
            <person name="Takamiya M."/>
            <person name="Ohfuku Y."/>
            <person name="Funahashi T."/>
            <person name="Tanaka T."/>
            <person name="Kudoh Y."/>
            <person name="Yamazaki J."/>
            <person name="Kushida N."/>
            <person name="Oguchi A."/>
            <person name="Aoki K."/>
            <person name="Yoshizawa T."/>
            <person name="Nakamura Y."/>
            <person name="Robb F.T."/>
            <person name="Horikoshi K."/>
            <person name="Masuchi Y."/>
            <person name="Shizuya H."/>
            <person name="Kikuchi H."/>
        </authorList>
    </citation>
    <scope>NUCLEOTIDE SEQUENCE [LARGE SCALE GENOMIC DNA]</scope>
    <source>
        <strain>ATCC 700860 / DSM 12428 / JCM 9974 / NBRC 100139 / OT-3</strain>
    </source>
</reference>
<sequence>MKMNSKQPRKQRKFLYNAPLHVRQKMMSAPLSKELREKYKVRNLPVRVGDKVRIMRGDFKGYEGKVVEVDLKRYRIYVEGVTLRKVNGTEVFYPIHPSNVMIIELNLDDEKRKKIIERRAG</sequence>
<proteinExistence type="inferred from homology"/>
<dbReference type="EMBL" id="BA000001">
    <property type="protein sequence ID" value="BAA30882.1"/>
    <property type="status" value="ALT_INIT"/>
    <property type="molecule type" value="Genomic_DNA"/>
</dbReference>
<dbReference type="PIR" id="C71186">
    <property type="entry name" value="C71186"/>
</dbReference>
<dbReference type="RefSeq" id="WP_048053474.1">
    <property type="nucleotide sequence ID" value="NC_000961.1"/>
</dbReference>
<dbReference type="SMR" id="O59429"/>
<dbReference type="STRING" id="70601.gene:9378765"/>
<dbReference type="EnsemblBacteria" id="BAA30882">
    <property type="protein sequence ID" value="BAA30882"/>
    <property type="gene ID" value="BAA30882"/>
</dbReference>
<dbReference type="GeneID" id="1442611"/>
<dbReference type="KEGG" id="pho:PH1767"/>
<dbReference type="eggNOG" id="arCOG04094">
    <property type="taxonomic scope" value="Archaea"/>
</dbReference>
<dbReference type="OrthoDB" id="10899at2157"/>
<dbReference type="Proteomes" id="UP000000752">
    <property type="component" value="Chromosome"/>
</dbReference>
<dbReference type="GO" id="GO:0015934">
    <property type="term" value="C:large ribosomal subunit"/>
    <property type="evidence" value="ECO:0007669"/>
    <property type="project" value="InterPro"/>
</dbReference>
<dbReference type="GO" id="GO:0019843">
    <property type="term" value="F:rRNA binding"/>
    <property type="evidence" value="ECO:0007669"/>
    <property type="project" value="UniProtKB-UniRule"/>
</dbReference>
<dbReference type="GO" id="GO:0003735">
    <property type="term" value="F:structural constituent of ribosome"/>
    <property type="evidence" value="ECO:0007669"/>
    <property type="project" value="InterPro"/>
</dbReference>
<dbReference type="GO" id="GO:0006412">
    <property type="term" value="P:translation"/>
    <property type="evidence" value="ECO:0007669"/>
    <property type="project" value="UniProtKB-UniRule"/>
</dbReference>
<dbReference type="CDD" id="cd06089">
    <property type="entry name" value="KOW_RPL26"/>
    <property type="match status" value="1"/>
</dbReference>
<dbReference type="FunFam" id="2.30.30.30:FF:000009">
    <property type="entry name" value="60S ribosomal protein L26"/>
    <property type="match status" value="1"/>
</dbReference>
<dbReference type="Gene3D" id="2.30.30.30">
    <property type="match status" value="1"/>
</dbReference>
<dbReference type="HAMAP" id="MF_01326_A">
    <property type="entry name" value="Ribosomal_uL24_A"/>
    <property type="match status" value="1"/>
</dbReference>
<dbReference type="InterPro" id="IPR005824">
    <property type="entry name" value="KOW"/>
</dbReference>
<dbReference type="InterPro" id="IPR014722">
    <property type="entry name" value="Rib_uL2_dom2"/>
</dbReference>
<dbReference type="InterPro" id="IPR005825">
    <property type="entry name" value="Ribosomal_uL24_CS"/>
</dbReference>
<dbReference type="InterPro" id="IPR005756">
    <property type="entry name" value="Ribosomal_uL24_euk/arc"/>
</dbReference>
<dbReference type="InterPro" id="IPR041988">
    <property type="entry name" value="Ribosomal_uL24_KOW"/>
</dbReference>
<dbReference type="InterPro" id="IPR008991">
    <property type="entry name" value="Translation_prot_SH3-like_sf"/>
</dbReference>
<dbReference type="NCBIfam" id="TIGR01080">
    <property type="entry name" value="rplX_A_E"/>
    <property type="match status" value="1"/>
</dbReference>
<dbReference type="PANTHER" id="PTHR11143">
    <property type="entry name" value="60S RIBOSOMAL PROTEIN L26 FAMILY MEMBER"/>
    <property type="match status" value="1"/>
</dbReference>
<dbReference type="Pfam" id="PF00467">
    <property type="entry name" value="KOW"/>
    <property type="match status" value="1"/>
</dbReference>
<dbReference type="Pfam" id="PF16906">
    <property type="entry name" value="Ribosomal_L26"/>
    <property type="match status" value="1"/>
</dbReference>
<dbReference type="SMART" id="SM00739">
    <property type="entry name" value="KOW"/>
    <property type="match status" value="1"/>
</dbReference>
<dbReference type="SUPFAM" id="SSF50104">
    <property type="entry name" value="Translation proteins SH3-like domain"/>
    <property type="match status" value="1"/>
</dbReference>
<dbReference type="PROSITE" id="PS01108">
    <property type="entry name" value="RIBOSOMAL_L24"/>
    <property type="match status" value="1"/>
</dbReference>
<protein>
    <recommendedName>
        <fullName evidence="1">Large ribosomal subunit protein uL24</fullName>
    </recommendedName>
    <alternativeName>
        <fullName evidence="2">50S ribosomal protein L24</fullName>
    </alternativeName>
</protein>